<organism>
    <name type="scientific">Chlamydia pneumoniae</name>
    <name type="common">Chlamydophila pneumoniae</name>
    <dbReference type="NCBI Taxonomy" id="83558"/>
    <lineage>
        <taxon>Bacteria</taxon>
        <taxon>Pseudomonadati</taxon>
        <taxon>Chlamydiota</taxon>
        <taxon>Chlamydiia</taxon>
        <taxon>Chlamydiales</taxon>
        <taxon>Chlamydiaceae</taxon>
        <taxon>Chlamydia/Chlamydophila group</taxon>
        <taxon>Chlamydia</taxon>
    </lineage>
</organism>
<protein>
    <recommendedName>
        <fullName evidence="1">Transaldolase</fullName>
        <ecNumber evidence="1">2.2.1.2</ecNumber>
    </recommendedName>
</protein>
<evidence type="ECO:0000255" key="1">
    <source>
        <dbReference type="HAMAP-Rule" id="MF_00492"/>
    </source>
</evidence>
<evidence type="ECO:0000305" key="2"/>
<reference key="1">
    <citation type="journal article" date="1999" name="Nat. Genet.">
        <title>Comparative genomes of Chlamydia pneumoniae and C. trachomatis.</title>
        <authorList>
            <person name="Kalman S."/>
            <person name="Mitchell W.P."/>
            <person name="Marathe R."/>
            <person name="Lammel C.J."/>
            <person name="Fan J."/>
            <person name="Hyman R.W."/>
            <person name="Olinger L."/>
            <person name="Grimwood J."/>
            <person name="Davis R.W."/>
            <person name="Stephens R.S."/>
        </authorList>
    </citation>
    <scope>NUCLEOTIDE SEQUENCE [LARGE SCALE GENOMIC DNA]</scope>
    <source>
        <strain>CWL029</strain>
    </source>
</reference>
<reference key="2">
    <citation type="journal article" date="2000" name="Nucleic Acids Res.">
        <title>Genome sequences of Chlamydia trachomatis MoPn and Chlamydia pneumoniae AR39.</title>
        <authorList>
            <person name="Read T.D."/>
            <person name="Brunham R.C."/>
            <person name="Shen C."/>
            <person name="Gill S.R."/>
            <person name="Heidelberg J.F."/>
            <person name="White O."/>
            <person name="Hickey E.K."/>
            <person name="Peterson J.D."/>
            <person name="Utterback T.R."/>
            <person name="Berry K.J."/>
            <person name="Bass S."/>
            <person name="Linher K.D."/>
            <person name="Weidman J.F."/>
            <person name="Khouri H.M."/>
            <person name="Craven B."/>
            <person name="Bowman C."/>
            <person name="Dodson R.J."/>
            <person name="Gwinn M.L."/>
            <person name="Nelson W.C."/>
            <person name="DeBoy R.T."/>
            <person name="Kolonay J.F."/>
            <person name="McClarty G."/>
            <person name="Salzberg S.L."/>
            <person name="Eisen J.A."/>
            <person name="Fraser C.M."/>
        </authorList>
    </citation>
    <scope>NUCLEOTIDE SEQUENCE [LARGE SCALE GENOMIC DNA]</scope>
    <source>
        <strain>AR39</strain>
    </source>
</reference>
<reference key="3">
    <citation type="journal article" date="2000" name="Nucleic Acids Res.">
        <title>Comparison of whole genome sequences of Chlamydia pneumoniae J138 from Japan and CWL029 from USA.</title>
        <authorList>
            <person name="Shirai M."/>
            <person name="Hirakawa H."/>
            <person name="Kimoto M."/>
            <person name="Tabuchi M."/>
            <person name="Kishi F."/>
            <person name="Ouchi K."/>
            <person name="Shiba T."/>
            <person name="Ishii K."/>
            <person name="Hattori M."/>
            <person name="Kuhara S."/>
            <person name="Nakazawa T."/>
        </authorList>
    </citation>
    <scope>NUCLEOTIDE SEQUENCE [LARGE SCALE GENOMIC DNA]</scope>
    <source>
        <strain>J138</strain>
    </source>
</reference>
<reference key="4">
    <citation type="submission" date="2002-05" db="EMBL/GenBank/DDBJ databases">
        <title>The genome sequence of Chlamydia pneumoniae TW183 and comparison with other Chlamydia strains based on whole genome sequence analysis.</title>
        <authorList>
            <person name="Geng M.M."/>
            <person name="Schuhmacher A."/>
            <person name="Muehldorfer I."/>
            <person name="Bensch K.W."/>
            <person name="Schaefer K.P."/>
            <person name="Schneider S."/>
            <person name="Pohl T."/>
            <person name="Essig A."/>
            <person name="Marre R."/>
            <person name="Melchers K."/>
        </authorList>
    </citation>
    <scope>NUCLEOTIDE SEQUENCE [LARGE SCALE GENOMIC DNA]</scope>
    <source>
        <strain>TW-183</strain>
    </source>
</reference>
<keyword id="KW-0963">Cytoplasm</keyword>
<keyword id="KW-0570">Pentose shunt</keyword>
<keyword id="KW-0704">Schiff base</keyword>
<keyword id="KW-0808">Transferase</keyword>
<gene>
    <name evidence="1" type="primary">tal</name>
    <name type="ordered locus">CPn_0083</name>
    <name type="ordered locus">CP_0692</name>
    <name type="ordered locus">CpB0083</name>
</gene>
<accession>Q9Z998</accession>
<accession>Q9JQK3</accession>
<accession>Q9K212</accession>
<sequence length="327" mass="36052">MSNQFDQLKKLSTIVCDSGDPELVKASGSQDATTNPSLILKVAQEPKFQELLNEAVVWGIRQNGDDLQTLSFILDKIQVNFALEIIKNIPGRISLEIDARLSFNVEAMVQRAVFLSQLFEAMGGDKKRLLVKIPGTWEGIRAVEFLEAKGIACNVTLIFNLVQAIAAAKAKATLISPFVGRIYDWWIAAYGDEGYSIDADPGVASVSNIYAYYKKFGIPTQIMAASFRTKEQVLALAGCDLLTISPKLLDELKKSQHPVKKELDPAEAKKLDVQPIELTESFFRFLMNEDAMATEKLAEGIRIFAGDTQILETAITEFIKQIAAEGA</sequence>
<dbReference type="EC" id="2.2.1.2" evidence="1"/>
<dbReference type="EMBL" id="AE001363">
    <property type="protein sequence ID" value="AAD18236.1"/>
    <property type="molecule type" value="Genomic_DNA"/>
</dbReference>
<dbReference type="EMBL" id="AE002161">
    <property type="protein sequence ID" value="AAF38500.1"/>
    <property type="status" value="ALT_INIT"/>
    <property type="molecule type" value="Genomic_DNA"/>
</dbReference>
<dbReference type="EMBL" id="BA000008">
    <property type="protein sequence ID" value="BAA98293.1"/>
    <property type="molecule type" value="Genomic_DNA"/>
</dbReference>
<dbReference type="EMBL" id="AE009440">
    <property type="protein sequence ID" value="AAP98016.1"/>
    <property type="molecule type" value="Genomic_DNA"/>
</dbReference>
<dbReference type="PIR" id="C86501">
    <property type="entry name" value="C86501"/>
</dbReference>
<dbReference type="PIR" id="D81550">
    <property type="entry name" value="D81550"/>
</dbReference>
<dbReference type="PIR" id="E72120">
    <property type="entry name" value="E72120"/>
</dbReference>
<dbReference type="RefSeq" id="NP_224291.1">
    <property type="nucleotide sequence ID" value="NC_000922.1"/>
</dbReference>
<dbReference type="RefSeq" id="WP_010882733.1">
    <property type="nucleotide sequence ID" value="NZ_LN847257.1"/>
</dbReference>
<dbReference type="SMR" id="Q9Z998"/>
<dbReference type="STRING" id="406984.CPK_ORF00592"/>
<dbReference type="GeneID" id="45050128"/>
<dbReference type="KEGG" id="cpa:CP_0692"/>
<dbReference type="KEGG" id="cpj:tal"/>
<dbReference type="KEGG" id="cpn:CPn_0083"/>
<dbReference type="KEGG" id="cpt:CpB0083"/>
<dbReference type="PATRIC" id="fig|115713.3.peg.95"/>
<dbReference type="eggNOG" id="COG0176">
    <property type="taxonomic scope" value="Bacteria"/>
</dbReference>
<dbReference type="HOGENOM" id="CLU_047470_0_1_0"/>
<dbReference type="OrthoDB" id="9807051at2"/>
<dbReference type="UniPathway" id="UPA00115">
    <property type="reaction ID" value="UER00414"/>
</dbReference>
<dbReference type="Proteomes" id="UP000000583">
    <property type="component" value="Chromosome"/>
</dbReference>
<dbReference type="Proteomes" id="UP000000801">
    <property type="component" value="Chromosome"/>
</dbReference>
<dbReference type="GO" id="GO:0005737">
    <property type="term" value="C:cytoplasm"/>
    <property type="evidence" value="ECO:0007669"/>
    <property type="project" value="UniProtKB-SubCell"/>
</dbReference>
<dbReference type="GO" id="GO:0004801">
    <property type="term" value="F:transaldolase activity"/>
    <property type="evidence" value="ECO:0000250"/>
    <property type="project" value="UniProtKB"/>
</dbReference>
<dbReference type="GO" id="GO:0005975">
    <property type="term" value="P:carbohydrate metabolic process"/>
    <property type="evidence" value="ECO:0007669"/>
    <property type="project" value="InterPro"/>
</dbReference>
<dbReference type="GO" id="GO:0006098">
    <property type="term" value="P:pentose-phosphate shunt"/>
    <property type="evidence" value="ECO:0007669"/>
    <property type="project" value="UniProtKB-UniRule"/>
</dbReference>
<dbReference type="CDD" id="cd00957">
    <property type="entry name" value="Transaldolase_TalAB"/>
    <property type="match status" value="1"/>
</dbReference>
<dbReference type="FunFam" id="3.20.20.70:FF:000163">
    <property type="entry name" value="Transaldolase B"/>
    <property type="match status" value="1"/>
</dbReference>
<dbReference type="Gene3D" id="3.20.20.70">
    <property type="entry name" value="Aldolase class I"/>
    <property type="match status" value="1"/>
</dbReference>
<dbReference type="HAMAP" id="MF_00492">
    <property type="entry name" value="Transaldolase_1"/>
    <property type="match status" value="1"/>
</dbReference>
<dbReference type="InterPro" id="IPR013785">
    <property type="entry name" value="Aldolase_TIM"/>
</dbReference>
<dbReference type="InterPro" id="IPR001585">
    <property type="entry name" value="TAL/FSA"/>
</dbReference>
<dbReference type="InterPro" id="IPR004730">
    <property type="entry name" value="Transaldolase_1"/>
</dbReference>
<dbReference type="InterPro" id="IPR018225">
    <property type="entry name" value="Transaldolase_AS"/>
</dbReference>
<dbReference type="NCBIfam" id="TIGR00874">
    <property type="entry name" value="talAB"/>
    <property type="match status" value="1"/>
</dbReference>
<dbReference type="PANTHER" id="PTHR10683">
    <property type="entry name" value="TRANSALDOLASE"/>
    <property type="match status" value="1"/>
</dbReference>
<dbReference type="PANTHER" id="PTHR10683:SF18">
    <property type="entry name" value="TRANSALDOLASE"/>
    <property type="match status" value="1"/>
</dbReference>
<dbReference type="Pfam" id="PF00923">
    <property type="entry name" value="TAL_FSA"/>
    <property type="match status" value="1"/>
</dbReference>
<dbReference type="SUPFAM" id="SSF51569">
    <property type="entry name" value="Aldolase"/>
    <property type="match status" value="1"/>
</dbReference>
<dbReference type="PROSITE" id="PS01054">
    <property type="entry name" value="TRANSALDOLASE_1"/>
    <property type="match status" value="1"/>
</dbReference>
<dbReference type="PROSITE" id="PS00958">
    <property type="entry name" value="TRANSALDOLASE_2"/>
    <property type="match status" value="1"/>
</dbReference>
<feature type="chain" id="PRO_0000173588" description="Transaldolase">
    <location>
        <begin position="1"/>
        <end position="327"/>
    </location>
</feature>
<feature type="active site" description="Schiff-base intermediate with substrate" evidence="1">
    <location>
        <position position="132"/>
    </location>
</feature>
<name>TAL_CHLPN</name>
<proteinExistence type="inferred from homology"/>
<comment type="function">
    <text evidence="1">Transaldolase is important for the balance of metabolites in the pentose-phosphate pathway.</text>
</comment>
<comment type="catalytic activity">
    <reaction evidence="1">
        <text>D-sedoheptulose 7-phosphate + D-glyceraldehyde 3-phosphate = D-erythrose 4-phosphate + beta-D-fructose 6-phosphate</text>
        <dbReference type="Rhea" id="RHEA:17053"/>
        <dbReference type="ChEBI" id="CHEBI:16897"/>
        <dbReference type="ChEBI" id="CHEBI:57483"/>
        <dbReference type="ChEBI" id="CHEBI:57634"/>
        <dbReference type="ChEBI" id="CHEBI:59776"/>
        <dbReference type="EC" id="2.2.1.2"/>
    </reaction>
</comment>
<comment type="pathway">
    <text evidence="1">Carbohydrate degradation; pentose phosphate pathway; D-glyceraldehyde 3-phosphate and beta-D-fructose 6-phosphate from D-ribose 5-phosphate and D-xylulose 5-phosphate (non-oxidative stage): step 2/3.</text>
</comment>
<comment type="subcellular location">
    <subcellularLocation>
        <location evidence="1">Cytoplasm</location>
    </subcellularLocation>
</comment>
<comment type="similarity">
    <text evidence="1 2">Belongs to the transaldolase family. Type 1 subfamily.</text>
</comment>
<comment type="sequence caution" evidence="2">
    <conflict type="erroneous initiation">
        <sequence resource="EMBL-CDS" id="AAF38500"/>
    </conflict>
    <text>Extended N-terminus.</text>
</comment>